<proteinExistence type="inferred from homology"/>
<sequence>MLDPNLLRNEPDAVAEKLARRGFKLDVDKLGALEERRKVLQVKTENLQAERNSRSKSIGQAKARGEDIEPLRLEVNKLGEELDAAKAELDALQAEIRDIALTIPNLPADEVPVGKDENDNVEVSRWGTPREFDFEVRDHVTLGEMHSGLDFAAAVKLTGSRFVVMKGQIARMHRALSQFMLDLHTEQHGYSENYVPYLVNQDTLYGTGQLPKFAGDLFHTRPLEEEADTSNYALIPTAEVPLTNLVRGEIIDEDDLPIKMTAHTPCFRSEAGSYGRDTRGLIRMHQFDKVEMVQIVRPEDSMAALEEMTGHAEKVLQLLGLPYRKIILCTGDMGFGACKTYDLEVWIPAQNTYREISSCSNVWDFQARRMQARCRSKSDKKTRLVHTLNGSGLAVGRTLVAVMENYQQADGRIEVPEVLRPYMNGLEYIG</sequence>
<feature type="chain" id="PRO_1000019822" description="Serine--tRNA ligase">
    <location>
        <begin position="1"/>
        <end position="430"/>
    </location>
</feature>
<feature type="binding site" evidence="1">
    <location>
        <begin position="237"/>
        <end position="239"/>
    </location>
    <ligand>
        <name>L-serine</name>
        <dbReference type="ChEBI" id="CHEBI:33384"/>
    </ligand>
</feature>
<feature type="binding site" evidence="1">
    <location>
        <begin position="268"/>
        <end position="270"/>
    </location>
    <ligand>
        <name>ATP</name>
        <dbReference type="ChEBI" id="CHEBI:30616"/>
    </ligand>
</feature>
<feature type="binding site" evidence="1">
    <location>
        <position position="291"/>
    </location>
    <ligand>
        <name>L-serine</name>
        <dbReference type="ChEBI" id="CHEBI:33384"/>
    </ligand>
</feature>
<feature type="binding site" evidence="1">
    <location>
        <begin position="355"/>
        <end position="358"/>
    </location>
    <ligand>
        <name>ATP</name>
        <dbReference type="ChEBI" id="CHEBI:30616"/>
    </ligand>
</feature>
<feature type="binding site" evidence="1">
    <location>
        <position position="391"/>
    </location>
    <ligand>
        <name>L-serine</name>
        <dbReference type="ChEBI" id="CHEBI:33384"/>
    </ligand>
</feature>
<reference key="1">
    <citation type="journal article" date="2005" name="Nucleic Acids Res.">
        <title>Genome dynamics and diversity of Shigella species, the etiologic agents of bacillary dysentery.</title>
        <authorList>
            <person name="Yang F."/>
            <person name="Yang J."/>
            <person name="Zhang X."/>
            <person name="Chen L."/>
            <person name="Jiang Y."/>
            <person name="Yan Y."/>
            <person name="Tang X."/>
            <person name="Wang J."/>
            <person name="Xiong Z."/>
            <person name="Dong J."/>
            <person name="Xue Y."/>
            <person name="Zhu Y."/>
            <person name="Xu X."/>
            <person name="Sun L."/>
            <person name="Chen S."/>
            <person name="Nie H."/>
            <person name="Peng J."/>
            <person name="Xu J."/>
            <person name="Wang Y."/>
            <person name="Yuan Z."/>
            <person name="Wen Y."/>
            <person name="Yao Z."/>
            <person name="Shen Y."/>
            <person name="Qiang B."/>
            <person name="Hou Y."/>
            <person name="Yu J."/>
            <person name="Jin Q."/>
        </authorList>
    </citation>
    <scope>NUCLEOTIDE SEQUENCE [LARGE SCALE GENOMIC DNA]</scope>
    <source>
        <strain>Ss046</strain>
    </source>
</reference>
<organism>
    <name type="scientific">Shigella sonnei (strain Ss046)</name>
    <dbReference type="NCBI Taxonomy" id="300269"/>
    <lineage>
        <taxon>Bacteria</taxon>
        <taxon>Pseudomonadati</taxon>
        <taxon>Pseudomonadota</taxon>
        <taxon>Gammaproteobacteria</taxon>
        <taxon>Enterobacterales</taxon>
        <taxon>Enterobacteriaceae</taxon>
        <taxon>Shigella</taxon>
    </lineage>
</organism>
<name>SYS_SHISS</name>
<keyword id="KW-0030">Aminoacyl-tRNA synthetase</keyword>
<keyword id="KW-0067">ATP-binding</keyword>
<keyword id="KW-0963">Cytoplasm</keyword>
<keyword id="KW-0436">Ligase</keyword>
<keyword id="KW-0547">Nucleotide-binding</keyword>
<keyword id="KW-0648">Protein biosynthesis</keyword>
<keyword id="KW-1185">Reference proteome</keyword>
<accession>Q3Z3M7</accession>
<gene>
    <name evidence="1" type="primary">serS</name>
    <name type="ordered locus">SSON_0894</name>
</gene>
<protein>
    <recommendedName>
        <fullName evidence="1">Serine--tRNA ligase</fullName>
        <ecNumber evidence="1">6.1.1.11</ecNumber>
    </recommendedName>
    <alternativeName>
        <fullName evidence="1">Seryl-tRNA synthetase</fullName>
        <shortName evidence="1">SerRS</shortName>
    </alternativeName>
    <alternativeName>
        <fullName evidence="1">Seryl-tRNA(Ser/Sec) synthetase</fullName>
    </alternativeName>
</protein>
<evidence type="ECO:0000255" key="1">
    <source>
        <dbReference type="HAMAP-Rule" id="MF_00176"/>
    </source>
</evidence>
<comment type="function">
    <text evidence="1">Catalyzes the attachment of serine to tRNA(Ser). Is also able to aminoacylate tRNA(Sec) with serine, to form the misacylated tRNA L-seryl-tRNA(Sec), which will be further converted into selenocysteinyl-tRNA(Sec).</text>
</comment>
<comment type="catalytic activity">
    <reaction evidence="1">
        <text>tRNA(Ser) + L-serine + ATP = L-seryl-tRNA(Ser) + AMP + diphosphate + H(+)</text>
        <dbReference type="Rhea" id="RHEA:12292"/>
        <dbReference type="Rhea" id="RHEA-COMP:9669"/>
        <dbReference type="Rhea" id="RHEA-COMP:9703"/>
        <dbReference type="ChEBI" id="CHEBI:15378"/>
        <dbReference type="ChEBI" id="CHEBI:30616"/>
        <dbReference type="ChEBI" id="CHEBI:33019"/>
        <dbReference type="ChEBI" id="CHEBI:33384"/>
        <dbReference type="ChEBI" id="CHEBI:78442"/>
        <dbReference type="ChEBI" id="CHEBI:78533"/>
        <dbReference type="ChEBI" id="CHEBI:456215"/>
        <dbReference type="EC" id="6.1.1.11"/>
    </reaction>
</comment>
<comment type="catalytic activity">
    <reaction evidence="1">
        <text>tRNA(Sec) + L-serine + ATP = L-seryl-tRNA(Sec) + AMP + diphosphate + H(+)</text>
        <dbReference type="Rhea" id="RHEA:42580"/>
        <dbReference type="Rhea" id="RHEA-COMP:9742"/>
        <dbReference type="Rhea" id="RHEA-COMP:10128"/>
        <dbReference type="ChEBI" id="CHEBI:15378"/>
        <dbReference type="ChEBI" id="CHEBI:30616"/>
        <dbReference type="ChEBI" id="CHEBI:33019"/>
        <dbReference type="ChEBI" id="CHEBI:33384"/>
        <dbReference type="ChEBI" id="CHEBI:78442"/>
        <dbReference type="ChEBI" id="CHEBI:78533"/>
        <dbReference type="ChEBI" id="CHEBI:456215"/>
        <dbReference type="EC" id="6.1.1.11"/>
    </reaction>
</comment>
<comment type="pathway">
    <text evidence="1">Aminoacyl-tRNA biosynthesis; selenocysteinyl-tRNA(Sec) biosynthesis; L-seryl-tRNA(Sec) from L-serine and tRNA(Sec): step 1/1.</text>
</comment>
<comment type="subunit">
    <text evidence="1">Homodimer. The tRNA molecule binds across the dimer.</text>
</comment>
<comment type="subcellular location">
    <subcellularLocation>
        <location evidence="1">Cytoplasm</location>
    </subcellularLocation>
</comment>
<comment type="domain">
    <text evidence="1">Consists of two distinct domains, a catalytic core and a N-terminal extension that is involved in tRNA binding.</text>
</comment>
<comment type="similarity">
    <text evidence="1">Belongs to the class-II aminoacyl-tRNA synthetase family. Type-1 seryl-tRNA synthetase subfamily.</text>
</comment>
<dbReference type="EC" id="6.1.1.11" evidence="1"/>
<dbReference type="EMBL" id="CP000038">
    <property type="protein sequence ID" value="AAZ87635.1"/>
    <property type="molecule type" value="Genomic_DNA"/>
</dbReference>
<dbReference type="RefSeq" id="WP_000886683.1">
    <property type="nucleotide sequence ID" value="NC_007384.1"/>
</dbReference>
<dbReference type="SMR" id="Q3Z3M7"/>
<dbReference type="GeneID" id="93776527"/>
<dbReference type="KEGG" id="ssn:SSON_0894"/>
<dbReference type="HOGENOM" id="CLU_023797_1_1_6"/>
<dbReference type="UniPathway" id="UPA00906">
    <property type="reaction ID" value="UER00895"/>
</dbReference>
<dbReference type="Proteomes" id="UP000002529">
    <property type="component" value="Chromosome"/>
</dbReference>
<dbReference type="GO" id="GO:0005737">
    <property type="term" value="C:cytoplasm"/>
    <property type="evidence" value="ECO:0007669"/>
    <property type="project" value="UniProtKB-SubCell"/>
</dbReference>
<dbReference type="GO" id="GO:0005524">
    <property type="term" value="F:ATP binding"/>
    <property type="evidence" value="ECO:0007669"/>
    <property type="project" value="UniProtKB-UniRule"/>
</dbReference>
<dbReference type="GO" id="GO:0004828">
    <property type="term" value="F:serine-tRNA ligase activity"/>
    <property type="evidence" value="ECO:0007669"/>
    <property type="project" value="UniProtKB-UniRule"/>
</dbReference>
<dbReference type="GO" id="GO:0016260">
    <property type="term" value="P:selenocysteine biosynthetic process"/>
    <property type="evidence" value="ECO:0007669"/>
    <property type="project" value="UniProtKB-UniRule"/>
</dbReference>
<dbReference type="GO" id="GO:0006434">
    <property type="term" value="P:seryl-tRNA aminoacylation"/>
    <property type="evidence" value="ECO:0007669"/>
    <property type="project" value="UniProtKB-UniRule"/>
</dbReference>
<dbReference type="CDD" id="cd00770">
    <property type="entry name" value="SerRS_core"/>
    <property type="match status" value="1"/>
</dbReference>
<dbReference type="FunFam" id="1.10.287.40:FF:000001">
    <property type="entry name" value="Serine--tRNA ligase"/>
    <property type="match status" value="1"/>
</dbReference>
<dbReference type="FunFam" id="3.30.930.10:FF:000018">
    <property type="entry name" value="Serine--tRNA ligase"/>
    <property type="match status" value="1"/>
</dbReference>
<dbReference type="Gene3D" id="3.30.930.10">
    <property type="entry name" value="Bira Bifunctional Protein, Domain 2"/>
    <property type="match status" value="1"/>
</dbReference>
<dbReference type="Gene3D" id="1.10.287.40">
    <property type="entry name" value="Serine-tRNA synthetase, tRNA binding domain"/>
    <property type="match status" value="1"/>
</dbReference>
<dbReference type="HAMAP" id="MF_00176">
    <property type="entry name" value="Ser_tRNA_synth_type1"/>
    <property type="match status" value="1"/>
</dbReference>
<dbReference type="InterPro" id="IPR002314">
    <property type="entry name" value="aa-tRNA-synt_IIb"/>
</dbReference>
<dbReference type="InterPro" id="IPR006195">
    <property type="entry name" value="aa-tRNA-synth_II"/>
</dbReference>
<dbReference type="InterPro" id="IPR045864">
    <property type="entry name" value="aa-tRNA-synth_II/BPL/LPL"/>
</dbReference>
<dbReference type="InterPro" id="IPR002317">
    <property type="entry name" value="Ser-tRNA-ligase_type_1"/>
</dbReference>
<dbReference type="InterPro" id="IPR015866">
    <property type="entry name" value="Ser-tRNA-synth_1_N"/>
</dbReference>
<dbReference type="InterPro" id="IPR042103">
    <property type="entry name" value="SerRS_1_N_sf"/>
</dbReference>
<dbReference type="InterPro" id="IPR033729">
    <property type="entry name" value="SerRS_core"/>
</dbReference>
<dbReference type="InterPro" id="IPR010978">
    <property type="entry name" value="tRNA-bd_arm"/>
</dbReference>
<dbReference type="NCBIfam" id="TIGR00414">
    <property type="entry name" value="serS"/>
    <property type="match status" value="1"/>
</dbReference>
<dbReference type="PANTHER" id="PTHR43697:SF1">
    <property type="entry name" value="SERINE--TRNA LIGASE"/>
    <property type="match status" value="1"/>
</dbReference>
<dbReference type="PANTHER" id="PTHR43697">
    <property type="entry name" value="SERYL-TRNA SYNTHETASE"/>
    <property type="match status" value="1"/>
</dbReference>
<dbReference type="Pfam" id="PF02403">
    <property type="entry name" value="Seryl_tRNA_N"/>
    <property type="match status" value="1"/>
</dbReference>
<dbReference type="Pfam" id="PF00587">
    <property type="entry name" value="tRNA-synt_2b"/>
    <property type="match status" value="1"/>
</dbReference>
<dbReference type="PIRSF" id="PIRSF001529">
    <property type="entry name" value="Ser-tRNA-synth_IIa"/>
    <property type="match status" value="1"/>
</dbReference>
<dbReference type="PRINTS" id="PR00981">
    <property type="entry name" value="TRNASYNTHSER"/>
</dbReference>
<dbReference type="SUPFAM" id="SSF55681">
    <property type="entry name" value="Class II aaRS and biotin synthetases"/>
    <property type="match status" value="1"/>
</dbReference>
<dbReference type="SUPFAM" id="SSF46589">
    <property type="entry name" value="tRNA-binding arm"/>
    <property type="match status" value="1"/>
</dbReference>
<dbReference type="PROSITE" id="PS50862">
    <property type="entry name" value="AA_TRNA_LIGASE_II"/>
    <property type="match status" value="1"/>
</dbReference>